<evidence type="ECO:0000250" key="1"/>
<evidence type="ECO:0000255" key="2"/>
<evidence type="ECO:0000305" key="3"/>
<protein>
    <recommendedName>
        <fullName>Disulfide bond formation protein B 2</fullName>
    </recommendedName>
    <alternativeName>
        <fullName>Disulfide oxidoreductase 2</fullName>
    </alternativeName>
</protein>
<gene>
    <name type="primary">dsbB2</name>
    <name type="ordered locus">PP_0190</name>
</gene>
<accession>P59344</accession>
<organism>
    <name type="scientific">Pseudomonas putida (strain ATCC 47054 / DSM 6125 / CFBP 8728 / NCIMB 11950 / KT2440)</name>
    <dbReference type="NCBI Taxonomy" id="160488"/>
    <lineage>
        <taxon>Bacteria</taxon>
        <taxon>Pseudomonadati</taxon>
        <taxon>Pseudomonadota</taxon>
        <taxon>Gammaproteobacteria</taxon>
        <taxon>Pseudomonadales</taxon>
        <taxon>Pseudomonadaceae</taxon>
        <taxon>Pseudomonas</taxon>
    </lineage>
</organism>
<name>DSBB2_PSEPK</name>
<sequence length="168" mass="18239">MLPARLRTFFLPACLVALAVLVASFRLENTVGLMPCPLCLSQRLLLGGYALLCFAAVLQAPGTRGILRYARLALGCSLAGALLAARHVWLQGAEGVNEVCPVPIGRVFEQSWSEAARQLLLGGPDCRSLAWSFLDLTLPEWSLLAFLLLAVLPLSCLLAYRFRTLART</sequence>
<proteinExistence type="inferred from homology"/>
<comment type="function">
    <text evidence="1">Required for disulfide bond formation in some periplasmic proteins. Acts by oxidizing the DsbA protein (By similarity).</text>
</comment>
<comment type="subcellular location">
    <subcellularLocation>
        <location evidence="1">Cell inner membrane</location>
        <topology evidence="1">Multi-pass membrane protein</topology>
    </subcellularLocation>
</comment>
<comment type="similarity">
    <text evidence="3">Belongs to the DsbB family.</text>
</comment>
<dbReference type="EMBL" id="AE015451">
    <property type="protein sequence ID" value="AAN65823.1"/>
    <property type="molecule type" value="Genomic_DNA"/>
</dbReference>
<dbReference type="RefSeq" id="NP_742359.1">
    <property type="nucleotide sequence ID" value="NC_002947.4"/>
</dbReference>
<dbReference type="RefSeq" id="WP_010951575.1">
    <property type="nucleotide sequence ID" value="NZ_CP169744.1"/>
</dbReference>
<dbReference type="STRING" id="160488.PP_0190"/>
<dbReference type="PaxDb" id="160488-PP_0190"/>
<dbReference type="KEGG" id="ppu:PP_0190"/>
<dbReference type="PATRIC" id="fig|160488.4.peg.201"/>
<dbReference type="eggNOG" id="COG1495">
    <property type="taxonomic scope" value="Bacteria"/>
</dbReference>
<dbReference type="HOGENOM" id="CLU_098660_1_1_6"/>
<dbReference type="OrthoDB" id="3711263at2"/>
<dbReference type="PhylomeDB" id="P59344"/>
<dbReference type="BioCyc" id="PPUT160488:G1G01-208-MONOMER"/>
<dbReference type="Proteomes" id="UP000000556">
    <property type="component" value="Chromosome"/>
</dbReference>
<dbReference type="GO" id="GO:0005886">
    <property type="term" value="C:plasma membrane"/>
    <property type="evidence" value="ECO:0007669"/>
    <property type="project" value="UniProtKB-SubCell"/>
</dbReference>
<dbReference type="GO" id="GO:0009055">
    <property type="term" value="F:electron transfer activity"/>
    <property type="evidence" value="ECO:0007669"/>
    <property type="project" value="UniProtKB-UniRule"/>
</dbReference>
<dbReference type="GO" id="GO:0015035">
    <property type="term" value="F:protein-disulfide reductase activity"/>
    <property type="evidence" value="ECO:0007669"/>
    <property type="project" value="UniProtKB-UniRule"/>
</dbReference>
<dbReference type="GO" id="GO:0006457">
    <property type="term" value="P:protein folding"/>
    <property type="evidence" value="ECO:0007669"/>
    <property type="project" value="InterPro"/>
</dbReference>
<dbReference type="Gene3D" id="1.20.1550.10">
    <property type="entry name" value="DsbB-like"/>
    <property type="match status" value="1"/>
</dbReference>
<dbReference type="HAMAP" id="MF_00286">
    <property type="entry name" value="DsbB"/>
    <property type="match status" value="1"/>
</dbReference>
<dbReference type="InterPro" id="IPR003752">
    <property type="entry name" value="DiS_bond_form_DsbB/BdbC"/>
</dbReference>
<dbReference type="InterPro" id="IPR022920">
    <property type="entry name" value="Disulphide_bond_form_DsbB"/>
</dbReference>
<dbReference type="InterPro" id="IPR050183">
    <property type="entry name" value="DsbB"/>
</dbReference>
<dbReference type="InterPro" id="IPR023380">
    <property type="entry name" value="DsbB-like_sf"/>
</dbReference>
<dbReference type="PANTHER" id="PTHR36570">
    <property type="entry name" value="DISULFIDE BOND FORMATION PROTEIN B"/>
    <property type="match status" value="1"/>
</dbReference>
<dbReference type="PANTHER" id="PTHR36570:SF3">
    <property type="entry name" value="DISULFIDE BOND FORMATION PROTEIN B"/>
    <property type="match status" value="1"/>
</dbReference>
<dbReference type="Pfam" id="PF02600">
    <property type="entry name" value="DsbB"/>
    <property type="match status" value="1"/>
</dbReference>
<dbReference type="SUPFAM" id="SSF158442">
    <property type="entry name" value="DsbB-like"/>
    <property type="match status" value="1"/>
</dbReference>
<keyword id="KW-0997">Cell inner membrane</keyword>
<keyword id="KW-1003">Cell membrane</keyword>
<keyword id="KW-0143">Chaperone</keyword>
<keyword id="KW-1015">Disulfide bond</keyword>
<keyword id="KW-0249">Electron transport</keyword>
<keyword id="KW-0472">Membrane</keyword>
<keyword id="KW-0560">Oxidoreductase</keyword>
<keyword id="KW-0676">Redox-active center</keyword>
<keyword id="KW-1185">Reference proteome</keyword>
<keyword id="KW-0812">Transmembrane</keyword>
<keyword id="KW-1133">Transmembrane helix</keyword>
<keyword id="KW-0813">Transport</keyword>
<reference key="1">
    <citation type="journal article" date="2002" name="Environ. Microbiol.">
        <title>Complete genome sequence and comparative analysis of the metabolically versatile Pseudomonas putida KT2440.</title>
        <authorList>
            <person name="Nelson K.E."/>
            <person name="Weinel C."/>
            <person name="Paulsen I.T."/>
            <person name="Dodson R.J."/>
            <person name="Hilbert H."/>
            <person name="Martins dos Santos V.A.P."/>
            <person name="Fouts D.E."/>
            <person name="Gill S.R."/>
            <person name="Pop M."/>
            <person name="Holmes M."/>
            <person name="Brinkac L.M."/>
            <person name="Beanan M.J."/>
            <person name="DeBoy R.T."/>
            <person name="Daugherty S.C."/>
            <person name="Kolonay J.F."/>
            <person name="Madupu R."/>
            <person name="Nelson W.C."/>
            <person name="White O."/>
            <person name="Peterson J.D."/>
            <person name="Khouri H.M."/>
            <person name="Hance I."/>
            <person name="Chris Lee P."/>
            <person name="Holtzapple E.K."/>
            <person name="Scanlan D."/>
            <person name="Tran K."/>
            <person name="Moazzez A."/>
            <person name="Utterback T.R."/>
            <person name="Rizzo M."/>
            <person name="Lee K."/>
            <person name="Kosack D."/>
            <person name="Moestl D."/>
            <person name="Wedler H."/>
            <person name="Lauber J."/>
            <person name="Stjepandic D."/>
            <person name="Hoheisel J."/>
            <person name="Straetz M."/>
            <person name="Heim S."/>
            <person name="Kiewitz C."/>
            <person name="Eisen J.A."/>
            <person name="Timmis K.N."/>
            <person name="Duesterhoeft A."/>
            <person name="Tuemmler B."/>
            <person name="Fraser C.M."/>
        </authorList>
    </citation>
    <scope>NUCLEOTIDE SEQUENCE [LARGE SCALE GENOMIC DNA]</scope>
    <source>
        <strain>ATCC 47054 / DSM 6125 / CFBP 8728 / NCIMB 11950 / KT2440</strain>
    </source>
</reference>
<feature type="chain" id="PRO_0000059352" description="Disulfide bond formation protein B 2">
    <location>
        <begin position="1"/>
        <end position="168"/>
    </location>
</feature>
<feature type="topological domain" description="Cytoplasmic" evidence="2">
    <location>
        <begin position="1"/>
        <end position="9"/>
    </location>
</feature>
<feature type="transmembrane region" description="Helical" evidence="2">
    <location>
        <begin position="10"/>
        <end position="26"/>
    </location>
</feature>
<feature type="topological domain" description="Periplasmic" evidence="2">
    <location>
        <begin position="27"/>
        <end position="44"/>
    </location>
</feature>
<feature type="transmembrane region" description="Helical" evidence="2">
    <location>
        <begin position="45"/>
        <end position="61"/>
    </location>
</feature>
<feature type="topological domain" description="Cytoplasmic" evidence="2">
    <location>
        <begin position="62"/>
        <end position="67"/>
    </location>
</feature>
<feature type="transmembrane region" description="Helical" evidence="2">
    <location>
        <begin position="68"/>
        <end position="85"/>
    </location>
</feature>
<feature type="topological domain" description="Periplasmic" evidence="2">
    <location>
        <begin position="86"/>
        <end position="140"/>
    </location>
</feature>
<feature type="transmembrane region" description="Helical" evidence="2">
    <location>
        <begin position="141"/>
        <end position="159"/>
    </location>
</feature>
<feature type="topological domain" description="Cytoplasmic" evidence="2">
    <location>
        <begin position="160"/>
        <end position="168"/>
    </location>
</feature>
<feature type="disulfide bond" description="Redox-active" evidence="1">
    <location>
        <begin position="36"/>
        <end position="39"/>
    </location>
</feature>
<feature type="disulfide bond" description="Redox-active" evidence="1">
    <location>
        <begin position="100"/>
        <end position="126"/>
    </location>
</feature>